<organismHost>
    <name type="scientific">Magallana gigas</name>
    <name type="common">Pacific oyster</name>
    <name type="synonym">Crassostrea gigas</name>
    <dbReference type="NCBI Taxonomy" id="29159"/>
</organismHost>
<organismHost>
    <name type="scientific">Pecten maximus</name>
    <name type="common">King scallop</name>
    <name type="synonym">Pilgrim's clam</name>
    <dbReference type="NCBI Taxonomy" id="6579"/>
</organismHost>
<feature type="chain" id="PRO_0000385075" description="Uncharacterized protein ORF47">
    <location>
        <begin position="1"/>
        <end position="1412"/>
    </location>
</feature>
<feature type="region of interest" description="Disordered" evidence="2">
    <location>
        <begin position="1"/>
        <end position="22"/>
    </location>
</feature>
<feature type="region of interest" description="Disordered" evidence="2">
    <location>
        <begin position="778"/>
        <end position="808"/>
    </location>
</feature>
<feature type="coiled-coil region" evidence="1">
    <location>
        <begin position="317"/>
        <end position="377"/>
    </location>
</feature>
<feature type="coiled-coil region" evidence="1">
    <location>
        <begin position="732"/>
        <end position="800"/>
    </location>
</feature>
<feature type="compositionally biased region" description="Basic and acidic residues" evidence="2">
    <location>
        <begin position="783"/>
        <end position="797"/>
    </location>
</feature>
<feature type="compositionally biased region" description="Acidic residues" evidence="2">
    <location>
        <begin position="798"/>
        <end position="808"/>
    </location>
</feature>
<organism>
    <name type="scientific">Ostreid herpesvirus 1 (isolate France)</name>
    <name type="common">OsHV-1</name>
    <name type="synonym">Pacific oyster herpesvirus</name>
    <dbReference type="NCBI Taxonomy" id="654903"/>
    <lineage>
        <taxon>Viruses</taxon>
        <taxon>Duplodnaviria</taxon>
        <taxon>Heunggongvirae</taxon>
        <taxon>Peploviricota</taxon>
        <taxon>Herviviricetes</taxon>
        <taxon>Herpesvirales</taxon>
        <taxon>Malacoherpesviridae</taxon>
        <taxon>Ostreavirus</taxon>
        <taxon>Ostreavirus ostreidmalaco1</taxon>
        <taxon>Ostreid herpesvirus 1</taxon>
    </lineage>
</organism>
<accession>Q6R7H7</accession>
<evidence type="ECO:0000255" key="1"/>
<evidence type="ECO:0000256" key="2">
    <source>
        <dbReference type="SAM" id="MobiDB-lite"/>
    </source>
</evidence>
<keyword id="KW-0175">Coiled coil</keyword>
<keyword id="KW-1185">Reference proteome</keyword>
<dbReference type="EMBL" id="AY509253">
    <property type="protein sequence ID" value="AAS00938.1"/>
    <property type="molecule type" value="Genomic_DNA"/>
</dbReference>
<dbReference type="RefSeq" id="YP_024591.1">
    <property type="nucleotide sequence ID" value="NC_005881.2"/>
</dbReference>
<dbReference type="KEGG" id="vg:2948186"/>
<dbReference type="Proteomes" id="UP000007021">
    <property type="component" value="Segment"/>
</dbReference>
<gene>
    <name type="ORF">ORF47</name>
</gene>
<proteinExistence type="predicted"/>
<name>Y047_OSHVF</name>
<sequence>MESINVVNSVEDLPGFNPDENVEENMEVVESVKNDLEMSDDEELELSLDLTGDSMFTPPPSKRKREELSDSMKQRVNYYAIADMRMKDECLDYIKNSTYANEGWTEEMTKEFLINQSMTMKLYLETPCDADKLREYLHSSFSDSEVFGIINMANVGDAGTGKTRCMINFQSSMPGMCITGPENKTTIHYSEEYMNRNQPGCRRFEKSTCTWHKFLNLMFANTTMQIQLKKLQDDEELNKETESFVNDVSMLGSPEELRKRTRELTLLYMVKLRNIMTTVYDQMKYNFTKEKMEIYRPMYDNDSPMNQDDKMTFTWVNNDFSASLKRLNTAIAMAEQRLFGGAGQPSGEIKVSKTLEKILKKQISDLKEERRLLILRHALSKNIKTQEEYRNYVSFMTSEKRAKFAGGPDLPPMTVIYEIVMAEEDGKTPLYMKFLHSMISTVANMIYNPPYYKIRPPIYFTSGSDTQFGSISSTASPLSYILSPAIKSDEKHTMVWRGQLFRRGLDDMSSDIAKAHRVPCLRLENNLPLDESILKLWERHSTLLGDPDYHPESVRIFATHNSINQFTNKMKDSGRADLYVNDLAMISSNVVPLEGSILSSGGINSKNGINTIELSTKSETEAKKARCLAWKKKMVIYSNKIKKRVKNENKPEETKLEIKPRKVVVKGVPMDANRIIPSSEEYIDRRTGGGKECAEVNIGYTRYSEALDVEMAKTLERLNMDYKKDLAIAYGSKEAVEAEEKMLKENEDMDGLALLKTKNVNKRAKMVVESISSCKTGSRKRKHEDIVKEHEAEKRDSDDEDDFEEVDVEDTYSPTKNITTMMYITGPAKELLSKDEHIEHRMYAGNIEKKLGQGKTYAKQVFTSARATDHLGIFEYVPEGDMVTIYGNVDVKAYDKDDMATFYKSVEKNISGVVMHMTFKRPRAFTSNRKVDMIRNNMTLIPRGVESTPMMMRMDGAYNNGSIASMEMKFLVNMEIVFEFLKEKIMYHMQTLIHNKMDDGELTDIFNQLFEYDGSSEMKLVANGYREAMKHCKNENKKEKGKKMGVEDLYKDSICWINCIQMLDMNFFENRKLTIYLHKSPLYDIFKYASEKSVSISANDVTFKSTIIGNYRHEALFHVVDKAIGFKPDFKKNGCGFGYEFKEEDNLDQKDRHKGDHMAMEWAMKHVYPELFYSTSAVVKYGDVMIMSSEPKMENPINWTELFCSEERKQWGKHGGSNEAFGVLARRFQAPPSTPDTILFNQKYRLPIGEGVGFPRPFRQGAGPKNSGVILKSKNKVLYYASNAAEFTDMGYDKKQAKAESGYALGMVCPFTISEAFTFHHAQGSTLAGGVFIDLGKLKNGNGELIHGMGGTSSAVLVGITRPTEVSNVKLANVEEFKKAYDKEAQTKDWARTLAKKRIISSVSTRFEKFKS</sequence>
<reference key="1">
    <citation type="journal article" date="2005" name="J. Gen. Virol.">
        <title>A novel class of herpesvirus with bivalve hosts.</title>
        <authorList>
            <person name="Davison A.J."/>
            <person name="Trus B.L."/>
            <person name="Cheng N."/>
            <person name="Steven A.C."/>
            <person name="Watson M.S."/>
            <person name="Cunningham C."/>
            <person name="Le Deuff R.M."/>
            <person name="Renault T."/>
        </authorList>
    </citation>
    <scope>NUCLEOTIDE SEQUENCE [LARGE SCALE GENOMIC DNA]</scope>
</reference>
<protein>
    <recommendedName>
        <fullName>Uncharacterized protein ORF47</fullName>
    </recommendedName>
</protein>